<feature type="chain" id="PRO_0000106642" description="Sperm protamine P3">
    <location>
        <begin position="1"/>
        <end position="54"/>
    </location>
</feature>
<feature type="region of interest" description="Disordered" evidence="1">
    <location>
        <begin position="1"/>
        <end position="54"/>
    </location>
</feature>
<reference evidence="3" key="1">
    <citation type="journal article" date="1999" name="J. Biol. Chem.">
        <title>DNA-interacting proteins in the spermiogenesis of the mollusc Murex brandaris.</title>
        <authorList>
            <person name="Caceres C."/>
            <person name="Gimenez-Bonafe P."/>
            <person name="Ribes E."/>
            <person name="Wouters-Tyrou D."/>
            <person name="Martinage A."/>
            <person name="Kouach M."/>
            <person name="Sautiere P."/>
            <person name="Muller S."/>
            <person name="Palau J."/>
            <person name="Subirana J.A."/>
            <person name="Cornudella L."/>
            <person name="Chiva M."/>
        </authorList>
    </citation>
    <scope>PROTEIN SEQUENCE</scope>
    <scope>FUNCTION</scope>
    <scope>SUBCELLULAR LOCATION</scope>
    <scope>MASS SPECTROMETRY</scope>
    <source>
        <tissue>Gonad</tissue>
        <tissue>Sperm</tissue>
    </source>
</reference>
<keyword id="KW-0158">Chromosome</keyword>
<keyword id="KW-0217">Developmental protein</keyword>
<keyword id="KW-0221">Differentiation</keyword>
<keyword id="KW-0903">Direct protein sequencing</keyword>
<keyword id="KW-0226">DNA condensation</keyword>
<keyword id="KW-0238">DNA-binding</keyword>
<keyword id="KW-0544">Nucleosome core</keyword>
<keyword id="KW-0539">Nucleus</keyword>
<keyword id="KW-0744">Spermatogenesis</keyword>
<accession>P83213</accession>
<protein>
    <recommendedName>
        <fullName>Sperm protamine P3</fullName>
    </recommendedName>
</protein>
<proteinExistence type="evidence at protein level"/>
<comment type="function">
    <text evidence="2">Protamines substitute for histones in the chromatin of sperm during the haploid phase of spermatogenesis. They compact sperm DNA into a highly condensed, stable and inactive complex.</text>
</comment>
<comment type="subcellular location">
    <subcellularLocation>
        <location evidence="2">Nucleus</location>
    </subcellularLocation>
    <subcellularLocation>
        <location evidence="2">Chromosome</location>
    </subcellularLocation>
</comment>
<comment type="tissue specificity">
    <text evidence="2">Gonads.</text>
</comment>
<comment type="mass spectrometry"/>
<name>HSP3_BOLBR</name>
<evidence type="ECO:0000256" key="1">
    <source>
        <dbReference type="SAM" id="MobiDB-lite"/>
    </source>
</evidence>
<evidence type="ECO:0000269" key="2">
    <source>
    </source>
</evidence>
<evidence type="ECO:0000305" key="3"/>
<sequence>RRRRRRGKGKGGKKKKGKKRRRRGRKGKGKGKKKGKRKGKRGGKRRRRRRKGKK</sequence>
<dbReference type="SMR" id="P83213"/>
<dbReference type="GO" id="GO:0000786">
    <property type="term" value="C:nucleosome"/>
    <property type="evidence" value="ECO:0007669"/>
    <property type="project" value="UniProtKB-KW"/>
</dbReference>
<dbReference type="GO" id="GO:0005634">
    <property type="term" value="C:nucleus"/>
    <property type="evidence" value="ECO:0007669"/>
    <property type="project" value="UniProtKB-SubCell"/>
</dbReference>
<dbReference type="GO" id="GO:0003677">
    <property type="term" value="F:DNA binding"/>
    <property type="evidence" value="ECO:0007669"/>
    <property type="project" value="UniProtKB-KW"/>
</dbReference>
<dbReference type="GO" id="GO:0030154">
    <property type="term" value="P:cell differentiation"/>
    <property type="evidence" value="ECO:0007669"/>
    <property type="project" value="UniProtKB-KW"/>
</dbReference>
<dbReference type="GO" id="GO:0030261">
    <property type="term" value="P:chromosome condensation"/>
    <property type="evidence" value="ECO:0007669"/>
    <property type="project" value="UniProtKB-KW"/>
</dbReference>
<dbReference type="GO" id="GO:0007283">
    <property type="term" value="P:spermatogenesis"/>
    <property type="evidence" value="ECO:0007669"/>
    <property type="project" value="UniProtKB-KW"/>
</dbReference>
<organism evidence="3">
    <name type="scientific">Bolinus brandaris</name>
    <name type="common">Purple dye murex</name>
    <name type="synonym">Murex brandaris</name>
    <dbReference type="NCBI Taxonomy" id="179646"/>
    <lineage>
        <taxon>Eukaryota</taxon>
        <taxon>Metazoa</taxon>
        <taxon>Spiralia</taxon>
        <taxon>Lophotrochozoa</taxon>
        <taxon>Mollusca</taxon>
        <taxon>Gastropoda</taxon>
        <taxon>Caenogastropoda</taxon>
        <taxon>Neogastropoda</taxon>
        <taxon>Muricoidea</taxon>
        <taxon>Muricidae</taxon>
        <taxon>Bolinus</taxon>
    </lineage>
</organism>